<name>SYHC_ORYSJ</name>
<feature type="chain" id="PRO_0000136339" description="Histidine--tRNA ligase, cytoplasmic">
    <location>
        <begin position="1"/>
        <end position="788"/>
    </location>
</feature>
<feature type="region of interest" description="Disordered" evidence="2">
    <location>
        <begin position="252"/>
        <end position="286"/>
    </location>
</feature>
<evidence type="ECO:0000250" key="1"/>
<evidence type="ECO:0000256" key="2">
    <source>
        <dbReference type="SAM" id="MobiDB-lite"/>
    </source>
</evidence>
<evidence type="ECO:0000305" key="3"/>
<reference key="1">
    <citation type="journal article" date="2005" name="Mol. Genet. Genomics">
        <title>A fine physical map of the rice chromosome 5.</title>
        <authorList>
            <person name="Cheng C.-H."/>
            <person name="Chung M.C."/>
            <person name="Liu S.-M."/>
            <person name="Chen S.-K."/>
            <person name="Kao F.Y."/>
            <person name="Lin S.-J."/>
            <person name="Hsiao S.-H."/>
            <person name="Tseng I.C."/>
            <person name="Hsing Y.-I.C."/>
            <person name="Wu H.-P."/>
            <person name="Chen C.-S."/>
            <person name="Shaw J.-F."/>
            <person name="Wu J."/>
            <person name="Matsumoto T."/>
            <person name="Sasaki T."/>
            <person name="Chen H.-C."/>
            <person name="Chow T.-Y."/>
        </authorList>
    </citation>
    <scope>NUCLEOTIDE SEQUENCE [LARGE SCALE GENOMIC DNA]</scope>
    <source>
        <strain>cv. Nipponbare</strain>
    </source>
</reference>
<reference key="2">
    <citation type="journal article" date="2005" name="Nature">
        <title>The map-based sequence of the rice genome.</title>
        <authorList>
            <consortium name="International rice genome sequencing project (IRGSP)"/>
        </authorList>
    </citation>
    <scope>NUCLEOTIDE SEQUENCE [LARGE SCALE GENOMIC DNA]</scope>
    <source>
        <strain>cv. Nipponbare</strain>
    </source>
</reference>
<reference key="3">
    <citation type="journal article" date="2008" name="Nucleic Acids Res.">
        <title>The rice annotation project database (RAP-DB): 2008 update.</title>
        <authorList>
            <consortium name="The rice annotation project (RAP)"/>
        </authorList>
    </citation>
    <scope>GENOME REANNOTATION</scope>
    <source>
        <strain>cv. Nipponbare</strain>
    </source>
</reference>
<reference key="4">
    <citation type="journal article" date="2013" name="Rice">
        <title>Improvement of the Oryza sativa Nipponbare reference genome using next generation sequence and optical map data.</title>
        <authorList>
            <person name="Kawahara Y."/>
            <person name="de la Bastide M."/>
            <person name="Hamilton J.P."/>
            <person name="Kanamori H."/>
            <person name="McCombie W.R."/>
            <person name="Ouyang S."/>
            <person name="Schwartz D.C."/>
            <person name="Tanaka T."/>
            <person name="Wu J."/>
            <person name="Zhou S."/>
            <person name="Childs K.L."/>
            <person name="Davidson R.M."/>
            <person name="Lin H."/>
            <person name="Quesada-Ocampo L."/>
            <person name="Vaillancourt B."/>
            <person name="Sakai H."/>
            <person name="Lee S.S."/>
            <person name="Kim J."/>
            <person name="Numa H."/>
            <person name="Itoh T."/>
            <person name="Buell C.R."/>
            <person name="Matsumoto T."/>
        </authorList>
    </citation>
    <scope>GENOME REANNOTATION</scope>
    <source>
        <strain>cv. Nipponbare</strain>
    </source>
</reference>
<reference key="5">
    <citation type="journal article" date="2003" name="Science">
        <title>Collection, mapping, and annotation of over 28,000 cDNA clones from japonica rice.</title>
        <authorList>
            <consortium name="The rice full-length cDNA consortium"/>
        </authorList>
    </citation>
    <scope>NUCLEOTIDE SEQUENCE [LARGE SCALE MRNA]</scope>
    <source>
        <strain>cv. Nipponbare</strain>
    </source>
</reference>
<reference key="6">
    <citation type="online journal article" date="1997" name="Plant Gene Register">
        <title>A cDNA clone encoding rice histidyl-tRNA synthetase.</title>
        <authorList>
            <person name="Akashi K."/>
            <person name="Small I.D."/>
        </authorList>
        <locator>PGR97-062</locator>
    </citation>
    <scope>NUCLEOTIDE SEQUENCE [MRNA] OF 272-788</scope>
    <source>
        <strain>cv. Nipponbare</strain>
    </source>
</reference>
<comment type="catalytic activity">
    <reaction>
        <text>tRNA(His) + L-histidine + ATP = L-histidyl-tRNA(His) + AMP + diphosphate + H(+)</text>
        <dbReference type="Rhea" id="RHEA:17313"/>
        <dbReference type="Rhea" id="RHEA-COMP:9665"/>
        <dbReference type="Rhea" id="RHEA-COMP:9689"/>
        <dbReference type="ChEBI" id="CHEBI:15378"/>
        <dbReference type="ChEBI" id="CHEBI:30616"/>
        <dbReference type="ChEBI" id="CHEBI:33019"/>
        <dbReference type="ChEBI" id="CHEBI:57595"/>
        <dbReference type="ChEBI" id="CHEBI:78442"/>
        <dbReference type="ChEBI" id="CHEBI:78527"/>
        <dbReference type="ChEBI" id="CHEBI:456215"/>
        <dbReference type="EC" id="6.1.1.21"/>
    </reaction>
</comment>
<comment type="subunit">
    <text evidence="1">Homodimer.</text>
</comment>
<comment type="similarity">
    <text evidence="3">Belongs to the class-II aminoacyl-tRNA synthetase family.</text>
</comment>
<sequence>MAPPAAAAAVTLGGKGAALTPAAVYALSHGLADPAIDCCASPLVRVADAVAALSCEAARGDVAAFDVPTSGDGLSAKDEADVAADVKMLLFGSKLVGAAGGADAASFTKVPTVNGIFREAVRALHARVRIELNAPVKLGKRDAVQTGEGKEEALVALATQLARPVQAMLKLSVARARLCVARIDDAELRKKLTDGVEIDDLKGMLGKVTIDSDAVSVLRGVYNSLLKFRDILAWEAAVAMAVIEMDSSIEKPQACEENEAGSSTENPHASGEKPKGDKKSKKKKTLGKGTSAVLMLLRDLVTNGKEVLSVNSALLAEWGTELSLLFDPKCPRLVSLVDKVKEIVETNEVRRLPKIPKGTRDFGKEQMAIREHAFSIITGVFKMHGAVSLDTPVFELRETLMGKYGEDSKLIYDLADQGGELCSLRYDLTVPFARYVAMNNISSLKRYQIAKVYRRDNPSKGRYREFYQCDFDIAGVYETMEPDFEVIKVLTELLDQLDIGTYEIKLNHRKLLDGMLEICGVPPEKFRTVCSSIDKLDKQTFEQVKKELVDEKGISNETADKIGDLVKTRGPPLEVLLELRKEGSKFMGNAGSVTALNELEILFKALDKANAIGKIVFDLSLARGLDYYTGVIYEAVFKGTTQVGSIAAGGRYDNLVGMFSGKQVPAVGVSLGIERVFAIMEQQEMEKNQIRATETEVLVSIIGKDLILAAELVSELWNAGIKAEFKLTTRIQNHLKYATQSGIPWMVLVGESEISSGKVKLKNLAASQEEEVDRTEFAQVLKQKLRNP</sequence>
<protein>
    <recommendedName>
        <fullName evidence="3">Histidine--tRNA ligase, cytoplasmic</fullName>
        <ecNumber evidence="3">6.1.1.21</ecNumber>
    </recommendedName>
    <alternativeName>
        <fullName evidence="3">Histidyl-tRNA synthetase</fullName>
        <shortName evidence="3">HisRS</shortName>
    </alternativeName>
</protein>
<dbReference type="EC" id="6.1.1.21" evidence="3"/>
<dbReference type="EMBL" id="AC084218">
    <property type="protein sequence ID" value="AAV32201.1"/>
    <property type="molecule type" value="Genomic_DNA"/>
</dbReference>
<dbReference type="EMBL" id="AP008211">
    <property type="protein sequence ID" value="BAF16583.1"/>
    <property type="molecule type" value="Genomic_DNA"/>
</dbReference>
<dbReference type="EMBL" id="AP014961">
    <property type="protein sequence ID" value="BAS92308.1"/>
    <property type="molecule type" value="Genomic_DNA"/>
</dbReference>
<dbReference type="EMBL" id="AK099789">
    <property type="status" value="NOT_ANNOTATED_CDS"/>
    <property type="molecule type" value="mRNA"/>
</dbReference>
<dbReference type="EMBL" id="Z85984">
    <property type="protein sequence ID" value="CAB06653.1"/>
    <property type="molecule type" value="mRNA"/>
</dbReference>
<dbReference type="PIR" id="T03774">
    <property type="entry name" value="T03774"/>
</dbReference>
<dbReference type="SMR" id="P93422"/>
<dbReference type="FunCoup" id="P93422">
    <property type="interactions" value="2679"/>
</dbReference>
<dbReference type="STRING" id="39947.P93422"/>
<dbReference type="PaxDb" id="39947-P93422"/>
<dbReference type="EnsemblPlants" id="Os05t0150900-01">
    <property type="protein sequence ID" value="Os05t0150900-01"/>
    <property type="gene ID" value="Os05g0150900"/>
</dbReference>
<dbReference type="Gramene" id="Os05t0150900-01">
    <property type="protein sequence ID" value="Os05t0150900-01"/>
    <property type="gene ID" value="Os05g0150900"/>
</dbReference>
<dbReference type="KEGG" id="dosa:Os05g0150900"/>
<dbReference type="eggNOG" id="KOG1936">
    <property type="taxonomic scope" value="Eukaryota"/>
</dbReference>
<dbReference type="InParanoid" id="P93422"/>
<dbReference type="BRENDA" id="6.1.1.21">
    <property type="organism ID" value="4460"/>
</dbReference>
<dbReference type="Proteomes" id="UP000000763">
    <property type="component" value="Chromosome 5"/>
</dbReference>
<dbReference type="Proteomes" id="UP000059680">
    <property type="component" value="Chromosome 5"/>
</dbReference>
<dbReference type="ExpressionAtlas" id="P93422">
    <property type="expression patterns" value="baseline and differential"/>
</dbReference>
<dbReference type="GO" id="GO:0005829">
    <property type="term" value="C:cytosol"/>
    <property type="evidence" value="ECO:0000318"/>
    <property type="project" value="GO_Central"/>
</dbReference>
<dbReference type="GO" id="GO:0005739">
    <property type="term" value="C:mitochondrion"/>
    <property type="evidence" value="ECO:0000318"/>
    <property type="project" value="GO_Central"/>
</dbReference>
<dbReference type="GO" id="GO:0005524">
    <property type="term" value="F:ATP binding"/>
    <property type="evidence" value="ECO:0007669"/>
    <property type="project" value="UniProtKB-KW"/>
</dbReference>
<dbReference type="GO" id="GO:0004821">
    <property type="term" value="F:histidine-tRNA ligase activity"/>
    <property type="evidence" value="ECO:0000318"/>
    <property type="project" value="GO_Central"/>
</dbReference>
<dbReference type="GO" id="GO:0003723">
    <property type="term" value="F:RNA binding"/>
    <property type="evidence" value="ECO:0000318"/>
    <property type="project" value="GO_Central"/>
</dbReference>
<dbReference type="GO" id="GO:0006427">
    <property type="term" value="P:histidyl-tRNA aminoacylation"/>
    <property type="evidence" value="ECO:0000318"/>
    <property type="project" value="GO_Central"/>
</dbReference>
<dbReference type="GO" id="GO:0032543">
    <property type="term" value="P:mitochondrial translation"/>
    <property type="evidence" value="ECO:0000318"/>
    <property type="project" value="GO_Central"/>
</dbReference>
<dbReference type="CDD" id="cd00773">
    <property type="entry name" value="HisRS-like_core"/>
    <property type="match status" value="1"/>
</dbReference>
<dbReference type="CDD" id="cd00859">
    <property type="entry name" value="HisRS_anticodon"/>
    <property type="match status" value="1"/>
</dbReference>
<dbReference type="FunFam" id="1.20.200.10:FF:000021">
    <property type="entry name" value="Histidine--tRNA ligase cytoplasmic"/>
    <property type="match status" value="1"/>
</dbReference>
<dbReference type="FunFam" id="3.30.930.10:FF:000061">
    <property type="entry name" value="Histidine--tRNA ligase, cytoplasmic"/>
    <property type="match status" value="1"/>
</dbReference>
<dbReference type="FunFam" id="3.40.50.800:FF:000012">
    <property type="entry name" value="Histidine--tRNA ligase, cytoplasmic"/>
    <property type="match status" value="1"/>
</dbReference>
<dbReference type="Gene3D" id="3.40.50.800">
    <property type="entry name" value="Anticodon-binding domain"/>
    <property type="match status" value="1"/>
</dbReference>
<dbReference type="Gene3D" id="3.30.930.10">
    <property type="entry name" value="Bira Bifunctional Protein, Domain 2"/>
    <property type="match status" value="1"/>
</dbReference>
<dbReference type="Gene3D" id="1.20.200.10">
    <property type="entry name" value="Fumarase/aspartase (Central domain)"/>
    <property type="match status" value="1"/>
</dbReference>
<dbReference type="HAMAP" id="MF_00127">
    <property type="entry name" value="His_tRNA_synth"/>
    <property type="match status" value="1"/>
</dbReference>
<dbReference type="InterPro" id="IPR006195">
    <property type="entry name" value="aa-tRNA-synth_II"/>
</dbReference>
<dbReference type="InterPro" id="IPR045864">
    <property type="entry name" value="aa-tRNA-synth_II/BPL/LPL"/>
</dbReference>
<dbReference type="InterPro" id="IPR004154">
    <property type="entry name" value="Anticodon-bd"/>
</dbReference>
<dbReference type="InterPro" id="IPR036621">
    <property type="entry name" value="Anticodon-bd_dom_sf"/>
</dbReference>
<dbReference type="InterPro" id="IPR001106">
    <property type="entry name" value="Aromatic_Lyase"/>
</dbReference>
<dbReference type="InterPro" id="IPR015807">
    <property type="entry name" value="His-tRNA-ligase"/>
</dbReference>
<dbReference type="InterPro" id="IPR041715">
    <property type="entry name" value="HisRS-like_core"/>
</dbReference>
<dbReference type="InterPro" id="IPR033656">
    <property type="entry name" value="HisRS_anticodon"/>
</dbReference>
<dbReference type="InterPro" id="IPR008948">
    <property type="entry name" value="L-Aspartase-like"/>
</dbReference>
<dbReference type="NCBIfam" id="TIGR00442">
    <property type="entry name" value="hisS"/>
    <property type="match status" value="1"/>
</dbReference>
<dbReference type="PANTHER" id="PTHR11476:SF7">
    <property type="entry name" value="HISTIDINE--TRNA LIGASE"/>
    <property type="match status" value="1"/>
</dbReference>
<dbReference type="PANTHER" id="PTHR11476">
    <property type="entry name" value="HISTIDYL-TRNA SYNTHETASE"/>
    <property type="match status" value="1"/>
</dbReference>
<dbReference type="Pfam" id="PF03129">
    <property type="entry name" value="HGTP_anticodon"/>
    <property type="match status" value="1"/>
</dbReference>
<dbReference type="Pfam" id="PF00221">
    <property type="entry name" value="Lyase_aromatic"/>
    <property type="match status" value="1"/>
</dbReference>
<dbReference type="Pfam" id="PF13393">
    <property type="entry name" value="tRNA-synt_His"/>
    <property type="match status" value="1"/>
</dbReference>
<dbReference type="SUPFAM" id="SSF52954">
    <property type="entry name" value="Class II aaRS ABD-related"/>
    <property type="match status" value="1"/>
</dbReference>
<dbReference type="SUPFAM" id="SSF55681">
    <property type="entry name" value="Class II aaRS and biotin synthetases"/>
    <property type="match status" value="1"/>
</dbReference>
<dbReference type="SUPFAM" id="SSF48557">
    <property type="entry name" value="L-aspartase-like"/>
    <property type="match status" value="1"/>
</dbReference>
<dbReference type="PROSITE" id="PS50862">
    <property type="entry name" value="AA_TRNA_LIGASE_II"/>
    <property type="match status" value="1"/>
</dbReference>
<gene>
    <name type="ordered locus">Os05g0150900</name>
    <name type="ordered locus">LOC_Os05g05840</name>
    <name type="ORF">P0001A07.8</name>
</gene>
<accession>P93422</accession>
<accession>A0A0P0WI08</accession>
<accession>Q0DKP0</accession>
<accession>Q5WN00</accession>
<keyword id="KW-0030">Aminoacyl-tRNA synthetase</keyword>
<keyword id="KW-0067">ATP-binding</keyword>
<keyword id="KW-0436">Ligase</keyword>
<keyword id="KW-0547">Nucleotide-binding</keyword>
<keyword id="KW-0648">Protein biosynthesis</keyword>
<keyword id="KW-1185">Reference proteome</keyword>
<proteinExistence type="evidence at transcript level"/>
<organism>
    <name type="scientific">Oryza sativa subsp. japonica</name>
    <name type="common">Rice</name>
    <dbReference type="NCBI Taxonomy" id="39947"/>
    <lineage>
        <taxon>Eukaryota</taxon>
        <taxon>Viridiplantae</taxon>
        <taxon>Streptophyta</taxon>
        <taxon>Embryophyta</taxon>
        <taxon>Tracheophyta</taxon>
        <taxon>Spermatophyta</taxon>
        <taxon>Magnoliopsida</taxon>
        <taxon>Liliopsida</taxon>
        <taxon>Poales</taxon>
        <taxon>Poaceae</taxon>
        <taxon>BOP clade</taxon>
        <taxon>Oryzoideae</taxon>
        <taxon>Oryzeae</taxon>
        <taxon>Oryzinae</taxon>
        <taxon>Oryza</taxon>
        <taxon>Oryza sativa</taxon>
    </lineage>
</organism>